<sequence>MISMLRCISLFLSVILITGYFVTPVMSCNCKAPETALCARRCQQHG</sequence>
<protein>
    <recommendedName>
        <fullName evidence="4">Apamin</fullName>
    </recommendedName>
</protein>
<comment type="function">
    <text evidence="1">Neurotoxin that blocks voltage-independent calcium-activated potassium channels (KCNN1=SK1, KCNN2=SK2, KCNN3=SK3).</text>
</comment>
<comment type="subcellular location">
    <subcellularLocation>
        <location evidence="1">Secreted</location>
    </subcellularLocation>
</comment>
<comment type="tissue specificity">
    <text evidence="3">Expressed by the venom gland.</text>
</comment>
<keyword id="KW-0027">Amidation</keyword>
<keyword id="KW-1221">Calcium-activated potassium channel impairing toxin</keyword>
<keyword id="KW-1015">Disulfide bond</keyword>
<keyword id="KW-0872">Ion channel impairing toxin</keyword>
<keyword id="KW-0528">Neurotoxin</keyword>
<keyword id="KW-0632">Potassium channel impairing toxin</keyword>
<keyword id="KW-1185">Reference proteome</keyword>
<keyword id="KW-0964">Secreted</keyword>
<keyword id="KW-0732">Signal</keyword>
<keyword id="KW-0800">Toxin</keyword>
<reference key="1">
    <citation type="submission" date="2002-10" db="EMBL/GenBank/DDBJ databases">
        <title>Cloning and comparison of the genes encoding precursor of apamin from the venom of honeybees and wasps.</title>
        <authorList>
            <person name="Zhang S.F."/>
            <person name="Shi W.J."/>
            <person name="Cheng J.A."/>
            <person name="Zhang C.X."/>
        </authorList>
    </citation>
    <scope>NUCLEOTIDE SEQUENCE [MRNA]</scope>
    <source>
        <tissue>Venom gland</tissue>
    </source>
</reference>
<reference evidence="5 6" key="2">
    <citation type="submission" date="2014-07" db="EMBL/GenBank/DDBJ databases">
        <title>Genomic and transcriptomic analysis on Apis cerana provide comprehensive insights into honey bee biology.</title>
        <authorList>
            <person name="Diao Q."/>
            <person name="Sun L."/>
            <person name="Zheng H."/>
            <person name="Zheng H."/>
            <person name="Xu S."/>
            <person name="Wang S."/>
            <person name="Zeng Z."/>
            <person name="Hu F."/>
            <person name="Su S."/>
            <person name="Wu J."/>
        </authorList>
    </citation>
    <scope>NUCLEOTIDE SEQUENCE [LARGE SCALE GENOMIC DNA]</scope>
</reference>
<proteinExistence type="inferred from homology"/>
<organism>
    <name type="scientific">Apis cerana cerana</name>
    <name type="common">Oriental honeybee</name>
    <dbReference type="NCBI Taxonomy" id="94128"/>
    <lineage>
        <taxon>Eukaryota</taxon>
        <taxon>Metazoa</taxon>
        <taxon>Ecdysozoa</taxon>
        <taxon>Arthropoda</taxon>
        <taxon>Hexapoda</taxon>
        <taxon>Insecta</taxon>
        <taxon>Pterygota</taxon>
        <taxon>Neoptera</taxon>
        <taxon>Endopterygota</taxon>
        <taxon>Hymenoptera</taxon>
        <taxon>Apocrita</taxon>
        <taxon>Aculeata</taxon>
        <taxon>Apoidea</taxon>
        <taxon>Anthophila</taxon>
        <taxon>Apidae</taxon>
        <taxon>Apis</taxon>
    </lineage>
</organism>
<accession>Q86QT2</accession>
<accession>A0A2A3EK62</accession>
<name>APAM_APICC</name>
<dbReference type="EMBL" id="AY164489">
    <property type="protein sequence ID" value="AAO19578.1"/>
    <property type="molecule type" value="mRNA"/>
</dbReference>
<dbReference type="EMBL" id="KZ288231">
    <property type="protein sequence ID" value="PBC31569.1"/>
    <property type="molecule type" value="Genomic_DNA"/>
</dbReference>
<dbReference type="BMRB" id="Q86QT2"/>
<dbReference type="OrthoDB" id="10280585at2759"/>
<dbReference type="Proteomes" id="UP000242457">
    <property type="component" value="Unassembled WGS sequence"/>
</dbReference>
<dbReference type="GO" id="GO:0005576">
    <property type="term" value="C:extracellular region"/>
    <property type="evidence" value="ECO:0007669"/>
    <property type="project" value="UniProtKB-SubCell"/>
</dbReference>
<dbReference type="GO" id="GO:0015459">
    <property type="term" value="F:potassium channel regulator activity"/>
    <property type="evidence" value="ECO:0007669"/>
    <property type="project" value="UniProtKB-KW"/>
</dbReference>
<dbReference type="GO" id="GO:0090729">
    <property type="term" value="F:toxin activity"/>
    <property type="evidence" value="ECO:0007669"/>
    <property type="project" value="UniProtKB-KW"/>
</dbReference>
<dbReference type="InterPro" id="IPR035361">
    <property type="entry name" value="Bee_toxin"/>
</dbReference>
<dbReference type="Pfam" id="PF17454">
    <property type="entry name" value="Bee_toxin"/>
    <property type="match status" value="1"/>
</dbReference>
<feature type="signal peptide" evidence="2">
    <location>
        <begin position="1"/>
        <end position="27"/>
    </location>
</feature>
<feature type="peptide" id="PRO_0000247528" description="Apamin">
    <location>
        <begin position="28"/>
        <end position="45"/>
    </location>
</feature>
<feature type="region of interest" description="Essential for toxin activity" evidence="1">
    <location>
        <begin position="40"/>
        <end position="41"/>
    </location>
</feature>
<feature type="modified residue" description="Histidine amide" evidence="1">
    <location>
        <position position="45"/>
    </location>
</feature>
<feature type="disulfide bond" evidence="1">
    <location>
        <begin position="28"/>
        <end position="38"/>
    </location>
</feature>
<feature type="disulfide bond" evidence="1">
    <location>
        <begin position="30"/>
        <end position="42"/>
    </location>
</feature>
<evidence type="ECO:0000250" key="1">
    <source>
        <dbReference type="UniProtKB" id="P01500"/>
    </source>
</evidence>
<evidence type="ECO:0000255" key="2"/>
<evidence type="ECO:0000305" key="3">
    <source ref="1"/>
</evidence>
<evidence type="ECO:0000312" key="4">
    <source>
        <dbReference type="EMBL" id="AAO19578.1"/>
    </source>
</evidence>
<evidence type="ECO:0000312" key="5">
    <source>
        <dbReference type="EMBL" id="PBC31569.1"/>
    </source>
</evidence>
<evidence type="ECO:0000312" key="6">
    <source>
        <dbReference type="Proteomes" id="UP000242457"/>
    </source>
</evidence>